<name>PABP2_BOVIN</name>
<evidence type="ECO:0000250" key="1"/>
<evidence type="ECO:0000250" key="2">
    <source>
        <dbReference type="UniProtKB" id="Q86U42"/>
    </source>
</evidence>
<evidence type="ECO:0000250" key="3">
    <source>
        <dbReference type="UniProtKB" id="Q8CCS6"/>
    </source>
</evidence>
<evidence type="ECO:0000255" key="4"/>
<evidence type="ECO:0000255" key="5">
    <source>
        <dbReference type="PROSITE-ProRule" id="PRU00176"/>
    </source>
</evidence>
<evidence type="ECO:0000256" key="6">
    <source>
        <dbReference type="SAM" id="MobiDB-lite"/>
    </source>
</evidence>
<evidence type="ECO:0000269" key="7">
    <source>
    </source>
</evidence>
<evidence type="ECO:0000269" key="8">
    <source>
    </source>
</evidence>
<evidence type="ECO:0000269" key="9">
    <source>
    </source>
</evidence>
<evidence type="ECO:0000269" key="10">
    <source>
    </source>
</evidence>
<evidence type="ECO:0000269" key="11">
    <source>
    </source>
</evidence>
<evidence type="ECO:0000269" key="12">
    <source>
    </source>
</evidence>
<reference key="1">
    <citation type="journal article" date="1995" name="Nucleic Acids Res.">
        <title>Isolation of genomic and cDNA clones encoding bovine poly(A) binding protein II.</title>
        <authorList>
            <person name="Nemeth A."/>
            <person name="Krause S."/>
            <person name="Blank D."/>
            <person name="Jenny A."/>
            <person name="Jenoe P."/>
            <person name="Lustig A."/>
            <person name="Wahle E."/>
        </authorList>
    </citation>
    <scope>NUCLEOTIDE SEQUENCE [MRNA]</scope>
    <scope>PROTEIN SEQUENCE OF 174-187</scope>
    <scope>RNA-BINDING</scope>
    <scope>FUNCTION IN PRE-MESSENGER POLYADENYLATION</scope>
    <scope>SUBUNIT</scope>
    <scope>IDENTIFICATION BY MASS SPECTROMETRY</scope>
    <source>
        <tissue>Aorta</tissue>
        <tissue>Liver</tissue>
        <tissue>Muzzle epithelium</tissue>
        <tissue>Thymus</tissue>
    </source>
</reference>
<reference key="2">
    <citation type="submission" date="2007-02" db="EMBL/GenBank/DDBJ databases">
        <authorList>
            <consortium name="NIH - Mammalian Gene Collection (MGC) project"/>
        </authorList>
    </citation>
    <scope>NUCLEOTIDE SEQUENCE [LARGE SCALE MRNA]</scope>
    <source>
        <strain>Hereford</strain>
        <tissue>Fetal pons</tissue>
    </source>
</reference>
<reference key="3">
    <citation type="journal article" date="1999" name="J. Biol. Chem.">
        <title>Unusual sites of arginine methylation in poly(A)-binding protein II and in vitro methylation by protein arginine methyltransferases PRMT1 and PRMT3.</title>
        <authorList>
            <person name="Smith J.J."/>
            <person name="Ruecknagel K.P."/>
            <person name="Schierhorn A."/>
            <person name="Tang J."/>
            <person name="Nemeth A."/>
            <person name="Linder M."/>
            <person name="Herschman H.R."/>
            <person name="Wahle E."/>
        </authorList>
    </citation>
    <scope>PROTEIN SEQUENCE OF 2-135; 140-207; 214-243 AND 248-306</scope>
    <scope>MASS SPECTROMETRY</scope>
    <scope>METHYLATION AT ARG-238; ARG-259; ARG-263; ARG-265; ARG-267; ARG-269; ARG-277; ARG-279; ARG-287; ARG-289; ARG-291; ARG-294; ARG-296 AND ARG-298</scope>
    <scope>ACETYLATION AT ALA-2</scope>
</reference>
<reference key="4">
    <citation type="journal article" date="2003" name="Protein Sci.">
        <title>Trinucleotide expansions leading to an extended poly-L-alanine segment in the poly(A) binding protein PABPN1 cause fibril formation.</title>
        <authorList>
            <person name="Scheuermann T."/>
            <person name="Schulz B."/>
            <person name="Blume A."/>
            <person name="Wahle E."/>
            <person name="Rudolph R."/>
            <person name="Schwarz E."/>
        </authorList>
    </citation>
    <scope>PROTEIN SEQUENCE OF 2-306</scope>
    <scope>STRUCTURAL ANALYSIS OF POLY-ALA EXTENSION</scope>
    <scope>IDENTIFICATION BY MASS SPECTROMETRY</scope>
</reference>
<reference key="5">
    <citation type="journal article" date="1999" name="Nucleic Acids Res.">
        <title>The Drosophila poly(A)-binding protein II is ubiquitous throughout Drosophila development and has the same function in mRNA polyadenylation as its bovine homolog in vitro.</title>
        <authorList>
            <person name="Benoit B."/>
            <person name="Nemeth A."/>
            <person name="Aulner N."/>
            <person name="Kuhn U."/>
            <person name="Simonelig M."/>
            <person name="Wahle E."/>
            <person name="Bourbon H.-M."/>
        </authorList>
    </citation>
    <scope>FUNCTION</scope>
</reference>
<reference key="6">
    <citation type="journal article" date="2000" name="RNA">
        <title>Deciphering the cellular pathway for transport of poly(A)-binding protein II.</title>
        <authorList>
            <person name="Calado A."/>
            <person name="Kutay U."/>
            <person name="Kuehn U."/>
            <person name="Wahle E."/>
            <person name="Carmo-Fonseca M."/>
        </authorList>
    </citation>
    <scope>MUTAGENESIS OF TYR-175 AND PHE-215</scope>
    <scope>INTERACTION WITH TRANSPORTIN</scope>
    <scope>SUBCELLULAR LOCATION</scope>
</reference>
<reference key="7">
    <citation type="journal article" date="2003" name="J. Biol. Chem.">
        <title>The RNA binding domains of the nuclear poly(A)-binding protein.</title>
        <authorList>
            <person name="Kuehn U."/>
            <person name="Nemeth A."/>
            <person name="Meyer S."/>
            <person name="Wahle E."/>
        </authorList>
    </citation>
    <scope>FUNCTION IN PAPOLA STIMULATION</scope>
    <scope>RNA-BINDING</scope>
    <scope>HOMOOLIGOMERIZATION</scope>
    <scope>MUTAGENESIS OF TYR-175; LYS-213 AND PHE-215</scope>
</reference>
<reference key="8">
    <citation type="journal article" date="2003" name="EMBO J.">
        <title>Stimulation of poly(A) polymerase through a direct interaction with the nuclear poly(A) binding protein allosterically regulated by RNA.</title>
        <authorList>
            <person name="Kerwitz Y."/>
            <person name="Kuehn U."/>
            <person name="Lilie H."/>
            <person name="Knoth A."/>
            <person name="Scheuermann T."/>
            <person name="Friedrich H."/>
            <person name="Schwarz E."/>
            <person name="Wahle E."/>
        </authorList>
    </citation>
    <scope>FUNCTION IN PAPOLA STIMULATION</scope>
    <scope>MUTAGENESIS OF LEU-119; GLU-120; ILE-122; LYS-123; ALA-124; VAL-126; MET-129; GLU-131; ALA-133; LYS-135; LEU-136 AND VAL-143</scope>
    <scope>INTERACTION WITH PAPOLA</scope>
</reference>
<dbReference type="EMBL" id="X89969">
    <property type="protein sequence ID" value="CAA62006.1"/>
    <property type="molecule type" value="mRNA"/>
</dbReference>
<dbReference type="EMBL" id="BC133558">
    <property type="protein sequence ID" value="AAI33559.1"/>
    <property type="molecule type" value="mRNA"/>
</dbReference>
<dbReference type="PIR" id="S59863">
    <property type="entry name" value="S59863"/>
</dbReference>
<dbReference type="RefSeq" id="NP_776994.1">
    <property type="nucleotide sequence ID" value="NM_174569.2"/>
</dbReference>
<dbReference type="SMR" id="Q28165"/>
<dbReference type="FunCoup" id="Q28165">
    <property type="interactions" value="4124"/>
</dbReference>
<dbReference type="STRING" id="9913.ENSBTAP00000021887"/>
<dbReference type="iPTMnet" id="Q28165"/>
<dbReference type="PaxDb" id="9913-ENSBTAP00000021887"/>
<dbReference type="Ensembl" id="ENSBTAT00000021887.6">
    <property type="protein sequence ID" value="ENSBTAP00000021887.4"/>
    <property type="gene ID" value="ENSBTAG00000006884.7"/>
</dbReference>
<dbReference type="GeneID" id="282298"/>
<dbReference type="KEGG" id="bta:282298"/>
<dbReference type="CTD" id="8106"/>
<dbReference type="VEuPathDB" id="HostDB:ENSBTAG00000006884"/>
<dbReference type="VGNC" id="VGNC:53575">
    <property type="gene designation" value="PABPN1"/>
</dbReference>
<dbReference type="eggNOG" id="KOG4209">
    <property type="taxonomic scope" value="Eukaryota"/>
</dbReference>
<dbReference type="GeneTree" id="ENSGT00940000154606"/>
<dbReference type="InParanoid" id="Q28165"/>
<dbReference type="OMA" id="PGHAERM"/>
<dbReference type="OrthoDB" id="4726at2759"/>
<dbReference type="TreeFam" id="TF105907"/>
<dbReference type="Reactome" id="R-BTA-72187">
    <property type="pathway name" value="mRNA 3'-end processing"/>
</dbReference>
<dbReference type="Reactome" id="R-BTA-72203">
    <property type="pathway name" value="Processing of Capped Intron-Containing Pre-mRNA"/>
</dbReference>
<dbReference type="Reactome" id="R-BTA-73856">
    <property type="pathway name" value="RNA Polymerase II Transcription Termination"/>
</dbReference>
<dbReference type="Reactome" id="R-BTA-77595">
    <property type="pathway name" value="Processing of Intronless Pre-mRNAs"/>
</dbReference>
<dbReference type="Proteomes" id="UP000009136">
    <property type="component" value="Chromosome 10"/>
</dbReference>
<dbReference type="Bgee" id="ENSBTAG00000006884">
    <property type="expression patterns" value="Expressed in granulosa cell and 100 other cell types or tissues"/>
</dbReference>
<dbReference type="GO" id="GO:0005737">
    <property type="term" value="C:cytoplasm"/>
    <property type="evidence" value="ECO:0007669"/>
    <property type="project" value="UniProtKB-SubCell"/>
</dbReference>
<dbReference type="GO" id="GO:0042405">
    <property type="term" value="C:nuclear inclusion body"/>
    <property type="evidence" value="ECO:0000250"/>
    <property type="project" value="UniProtKB"/>
</dbReference>
<dbReference type="GO" id="GO:0016607">
    <property type="term" value="C:nuclear speck"/>
    <property type="evidence" value="ECO:0007669"/>
    <property type="project" value="UniProtKB-SubCell"/>
</dbReference>
<dbReference type="GO" id="GO:0005634">
    <property type="term" value="C:nucleus"/>
    <property type="evidence" value="ECO:0000250"/>
    <property type="project" value="UniProtKB"/>
</dbReference>
<dbReference type="GO" id="GO:1990904">
    <property type="term" value="C:ribonucleoprotein complex"/>
    <property type="evidence" value="ECO:0000250"/>
    <property type="project" value="UniProtKB"/>
</dbReference>
<dbReference type="GO" id="GO:0042802">
    <property type="term" value="F:identical protein binding"/>
    <property type="evidence" value="ECO:0000314"/>
    <property type="project" value="MGI"/>
</dbReference>
<dbReference type="GO" id="GO:0008143">
    <property type="term" value="F:poly(A) binding"/>
    <property type="evidence" value="ECO:0000318"/>
    <property type="project" value="GO_Central"/>
</dbReference>
<dbReference type="GO" id="GO:0070063">
    <property type="term" value="F:RNA polymerase binding"/>
    <property type="evidence" value="ECO:0000250"/>
    <property type="project" value="UniProtKB"/>
</dbReference>
<dbReference type="GO" id="GO:0071222">
    <property type="term" value="P:cellular response to lipopolysaccharide"/>
    <property type="evidence" value="ECO:0000250"/>
    <property type="project" value="UniProtKB"/>
</dbReference>
<dbReference type="GO" id="GO:0000165">
    <property type="term" value="P:MAPK cascade"/>
    <property type="evidence" value="ECO:0000250"/>
    <property type="project" value="UniProtKB"/>
</dbReference>
<dbReference type="GO" id="GO:0006397">
    <property type="term" value="P:mRNA processing"/>
    <property type="evidence" value="ECO:0007669"/>
    <property type="project" value="UniProtKB-KW"/>
</dbReference>
<dbReference type="GO" id="GO:0016973">
    <property type="term" value="P:poly(A)+ mRNA export from nucleus"/>
    <property type="evidence" value="ECO:0007669"/>
    <property type="project" value="Ensembl"/>
</dbReference>
<dbReference type="GO" id="GO:1904247">
    <property type="term" value="P:positive regulation of polynucleotide adenylyltransferase activity"/>
    <property type="evidence" value="ECO:0000250"/>
    <property type="project" value="UniProtKB"/>
</dbReference>
<dbReference type="CDD" id="cd12550">
    <property type="entry name" value="RRM_II_PABPN1"/>
    <property type="match status" value="1"/>
</dbReference>
<dbReference type="FunFam" id="3.30.70.330:FF:000311">
    <property type="entry name" value="polyadenylate-binding protein 2"/>
    <property type="match status" value="1"/>
</dbReference>
<dbReference type="Gene3D" id="3.30.70.330">
    <property type="match status" value="1"/>
</dbReference>
<dbReference type="InterPro" id="IPR012677">
    <property type="entry name" value="Nucleotide-bd_a/b_plait_sf"/>
</dbReference>
<dbReference type="InterPro" id="IPR035979">
    <property type="entry name" value="RBD_domain_sf"/>
</dbReference>
<dbReference type="InterPro" id="IPR000504">
    <property type="entry name" value="RRM_dom"/>
</dbReference>
<dbReference type="PANTHER" id="PTHR23236">
    <property type="entry name" value="EUKARYOTIC TRANSLATION INITIATION FACTOR 4B/4H"/>
    <property type="match status" value="1"/>
</dbReference>
<dbReference type="PANTHER" id="PTHR23236:SF16">
    <property type="entry name" value="POLYADENYLATE-BINDING PROTEIN 2"/>
    <property type="match status" value="1"/>
</dbReference>
<dbReference type="Pfam" id="PF00076">
    <property type="entry name" value="RRM_1"/>
    <property type="match status" value="1"/>
</dbReference>
<dbReference type="SMART" id="SM00360">
    <property type="entry name" value="RRM"/>
    <property type="match status" value="1"/>
</dbReference>
<dbReference type="SUPFAM" id="SSF54928">
    <property type="entry name" value="RNA-binding domain, RBD"/>
    <property type="match status" value="1"/>
</dbReference>
<dbReference type="PROSITE" id="PS50102">
    <property type="entry name" value="RRM"/>
    <property type="match status" value="1"/>
</dbReference>
<proteinExistence type="evidence at protein level"/>
<keyword id="KW-0007">Acetylation</keyword>
<keyword id="KW-0175">Coiled coil</keyword>
<keyword id="KW-0963">Cytoplasm</keyword>
<keyword id="KW-0903">Direct protein sequencing</keyword>
<keyword id="KW-0488">Methylation</keyword>
<keyword id="KW-0507">mRNA processing</keyword>
<keyword id="KW-0539">Nucleus</keyword>
<keyword id="KW-0597">Phosphoprotein</keyword>
<keyword id="KW-1185">Reference proteome</keyword>
<keyword id="KW-0694">RNA-binding</keyword>
<accession>Q28165</accession>
<accession>A3KN38</accession>
<comment type="function">
    <text evidence="2 9 10 12">Involved in the 3'-end formation of mRNA precursors (pre-mRNA) by the addition of a poly(A) tail of 200-250 nt to the upstream cleavage product (PubMed:10481015, PubMed:7479061). Stimulates poly(A) polymerase (PAPOLA) conferring processivity on the poly(A) tail elongation reaction and also controls the poly(A) tail length (PubMed:12637556). Increases the affinity of poly(A) polymerase for RNA (PubMed:12637556, PubMed:12853485). Is also present at various stages of mRNA metabolism including nucleocytoplasmic trafficking and nonsense-mediated decay (NMD) of mRNA. Cooperates with SKIP to synergistically activate E-box-mediated transcription through MYOD1 and may regulate the expression of muscle-specific genes (By similarity). Binds to poly(A) and to poly(G) with high affinity (PubMed:12637556, PubMed:7479061). May protect the poly(A) tail from degradation (PubMed:7479061). Subunit of the trimeric poly(A) tail exosome targeting (PAXT) complex, a complex that directs a subset of long and polyadenylated poly(A) RNAs for exosomal degradation. The RNA exosome is fundamental for the degradation of RNA in eukaryotic nuclei. Substrate targeting is facilitated by its cofactor MTREX, which links to RNA-binding protein adapters (By similarity).</text>
</comment>
<comment type="subunit">
    <text evidence="2 3 8 10 12">Monomer and homooligomer. Binds RNA as a monomer and oligomerizes when bound to poly(A). Associates in a ternary complex with CPSF4 and NS/NS1 and interaction with NS/NS1, blocks nuclear export of host cell mRNAs. Associates in a single complex with SKIP and MYOD1 and interacts with SKIP in differentiated myocytes. Interacts with NUDT21/CPSF5. Identified in a IGF2BP1-dependent mRNP granule complex containing untranslated mRNAs. Interacts with PAPOLA, but only in presence of oligo(A) RNA. Interacts with transportin. May interact with SETX. Interacts (via RRM domain and C-terminal arginine-rich region) with ZFP36 (via hypophosphorylated form); this interaction occurs in the nucleus in a RNA-independent manner, decreases in presence of single-stranded poly(A) RNA-oligomer and in a p38-dependent-manner and may down-regulated RNA poly(A) polymerase activity (By similarity). Component of the poly(A) tail exosome targeting (PAXT) complex composed of PABPN1, ZFC3H1 and MTREX. Interacts with ZFC3H1 in a RNase-insensitive manner (By similarity). Interacts with FRG1 (By similarity). Interacts with ZC3H11A (By similarity).</text>
</comment>
<comment type="subcellular location">
    <subcellularLocation>
        <location evidence="8">Nucleus</location>
    </subcellularLocation>
    <subcellularLocation>
        <location evidence="8">Cytoplasm</location>
    </subcellularLocation>
    <subcellularLocation>
        <location evidence="8">Nucleus speckle</location>
    </subcellularLocation>
    <text evidence="2 8">Localized in cytoplasmic mRNP granules containing untranslated mRNAs (By similarity). Shuttles between the nucleus and the cytoplasm but predominantly found in the nucleus. Its nuclear import may involve the nucleocytoplasmic transport receptor transportin and a RAN-GTP-sensitive import mechanism (PubMed:10688363). Is exported to the cytoplasm by a carrier-mediated pathway that is independent of mRNA traffic. Nucleus; nuclear speckle. Colocalizes with SKIP and poly(A) RNA in nuclear speckles (By similarity).</text>
</comment>
<comment type="tissue specificity">
    <text>Ubiquitous.</text>
</comment>
<comment type="domain">
    <text>The RRM domain is essential for specific adenine bases recognition in the poly(A) tail but not sufficient for poly(A) binding.</text>
</comment>
<comment type="PTM">
    <text>Arginine dimethylation is asymmetric and involves PRMT1 and PRMT3. It does not influence the RNA binding properties.</text>
</comment>
<comment type="mass spectrometry"/>
<sequence>MAAAAAAAAAAGAAGGRGSGPGRRRHLVPGAGGEAGEGAPGGAGDYGNGLESEELEPEELLLEPEPEPEPEEEPPRPRAPPGAPGPGPGSGAPGNQEEEEESGLVEGDPGDGAIEDPELEAIKARVREMEEEAEKLKELQNEVEKQMNMSPPPGNAGPVIMSIEEKMEADARSIYVGNVDYGATAEELEAHFHGCGSVNRVTILCDKFSGHPKGFAYIEFSDKESVRTSLALDESLFRGRQIKVIPKRTNRPGISTTDRGFPRARYRARTTNYNSSRSRFYSGFNSRPRGRVYRGRARATSWYSPY</sequence>
<protein>
    <recommendedName>
        <fullName>Polyadenylate-binding protein 2</fullName>
        <shortName>PABP-2</shortName>
        <shortName>Poly(A)-binding protein 2</shortName>
    </recommendedName>
    <alternativeName>
        <fullName>Nuclear poly(A)-binding protein 1</fullName>
    </alternativeName>
    <alternativeName>
        <fullName>Poly(A)-binding protein II</fullName>
        <shortName>PABII</shortName>
    </alternativeName>
    <alternativeName>
        <fullName>Polyadenylate-binding nuclear protein 1</fullName>
    </alternativeName>
</protein>
<feature type="initiator methionine" description="Removed" evidence="7 11">
    <location>
        <position position="1"/>
    </location>
</feature>
<feature type="chain" id="PRO_0000081710" description="Polyadenylate-binding protein 2">
    <location>
        <begin position="2"/>
        <end position="306"/>
    </location>
</feature>
<feature type="domain" description="RRM" evidence="5">
    <location>
        <begin position="172"/>
        <end position="249"/>
    </location>
</feature>
<feature type="region of interest" description="Disordered" evidence="6">
    <location>
        <begin position="1"/>
        <end position="115"/>
    </location>
</feature>
<feature type="region of interest" description="Interaction with SKIP" evidence="1">
    <location>
        <begin position="2"/>
        <end position="145"/>
    </location>
</feature>
<feature type="region of interest" description="Stimulates PAPOLA">
    <location>
        <begin position="119"/>
        <end position="147"/>
    </location>
</feature>
<feature type="region of interest" description="Necessary for homooligomerization" evidence="1">
    <location>
        <begin position="155"/>
        <end position="306"/>
    </location>
</feature>
<feature type="region of interest" description="Interaction with PAPOLA" evidence="10">
    <location>
        <begin position="286"/>
        <end position="306"/>
    </location>
</feature>
<feature type="coiled-coil region" evidence="4">
    <location>
        <begin position="115"/>
        <end position="151"/>
    </location>
</feature>
<feature type="compositionally biased region" description="Low complexity" evidence="6">
    <location>
        <begin position="1"/>
        <end position="12"/>
    </location>
</feature>
<feature type="compositionally biased region" description="Gly residues" evidence="6">
    <location>
        <begin position="30"/>
        <end position="47"/>
    </location>
</feature>
<feature type="compositionally biased region" description="Acidic residues" evidence="6">
    <location>
        <begin position="51"/>
        <end position="72"/>
    </location>
</feature>
<feature type="compositionally biased region" description="Pro residues" evidence="6">
    <location>
        <begin position="77"/>
        <end position="87"/>
    </location>
</feature>
<feature type="modified residue" description="N-acetylalanine" evidence="7">
    <location>
        <position position="2"/>
    </location>
</feature>
<feature type="modified residue" description="Omega-N-methylarginine" evidence="3">
    <location>
        <position position="17"/>
    </location>
</feature>
<feature type="modified residue" description="Phosphoserine" evidence="2">
    <location>
        <position position="19"/>
    </location>
</feature>
<feature type="modified residue" description="Phosphoserine" evidence="2">
    <location>
        <position position="52"/>
    </location>
</feature>
<feature type="modified residue" description="Phosphoserine" evidence="2">
    <location>
        <position position="150"/>
    </location>
</feature>
<feature type="modified residue" description="Phosphoserine" evidence="2">
    <location>
        <position position="235"/>
    </location>
</feature>
<feature type="modified residue" description="Asymmetric dimethylarginine; alternate" evidence="7">
    <location>
        <position position="238"/>
    </location>
</feature>
<feature type="modified residue" description="Omega-N-methylarginine; alternate" evidence="7">
    <location>
        <position position="238"/>
    </location>
</feature>
<feature type="modified residue" description="Asymmetric dimethylarginine; alternate" evidence="7">
    <location>
        <position position="259"/>
    </location>
</feature>
<feature type="modified residue" description="Omega-N-methylarginine; alternate" evidence="2">
    <location>
        <position position="259"/>
    </location>
</feature>
<feature type="modified residue" description="Asymmetric dimethylarginine; alternate" evidence="7">
    <location>
        <position position="263"/>
    </location>
</feature>
<feature type="modified residue" description="Omega-N-methylarginine; alternate" evidence="2">
    <location>
        <position position="263"/>
    </location>
</feature>
<feature type="modified residue" description="Asymmetric dimethylarginine" evidence="7">
    <location>
        <position position="265"/>
    </location>
</feature>
<feature type="modified residue" description="Asymmetric dimethylarginine" evidence="7">
    <location>
        <position position="267"/>
    </location>
</feature>
<feature type="modified residue" description="Asymmetric dimethylarginine" evidence="7">
    <location>
        <position position="269"/>
    </location>
</feature>
<feature type="modified residue" description="Asymmetric dimethylarginine" evidence="7">
    <location>
        <position position="277"/>
    </location>
</feature>
<feature type="modified residue" description="Asymmetric dimethylarginine" evidence="7">
    <location>
        <position position="279"/>
    </location>
</feature>
<feature type="modified residue" description="Asymmetric dimethylarginine" evidence="7">
    <location>
        <position position="287"/>
    </location>
</feature>
<feature type="modified residue" description="Asymmetric dimethylarginine" evidence="7">
    <location>
        <position position="289"/>
    </location>
</feature>
<feature type="modified residue" description="Asymmetric dimethylarginine" evidence="7">
    <location>
        <position position="291"/>
    </location>
</feature>
<feature type="modified residue" description="Asymmetric dimethylarginine" evidence="7">
    <location>
        <position position="294"/>
    </location>
</feature>
<feature type="modified residue" description="Asymmetric dimethylarginine" evidence="7">
    <location>
        <position position="296"/>
    </location>
</feature>
<feature type="modified residue" description="Asymmetric dimethylarginine" evidence="7">
    <location>
        <position position="298"/>
    </location>
</feature>
<feature type="mutagenesis site" description="Strong defects in the stimulation of PAPOLA." evidence="10">
    <original>L</original>
    <variation>A</variation>
    <location>
        <position position="119"/>
    </location>
</feature>
<feature type="mutagenesis site" description="No defects in the stimulation of PAPOLA." evidence="10">
    <original>E</original>
    <variation>A</variation>
    <location>
        <position position="120"/>
    </location>
</feature>
<feature type="mutagenesis site" description="Strong defects in the stimulation of PAPOLA." evidence="10">
    <original>I</original>
    <variation>Q</variation>
    <location>
        <position position="122"/>
    </location>
</feature>
<feature type="mutagenesis site" description="No defects in the stimulation of PAPOLA." evidence="10">
    <original>K</original>
    <variation>A</variation>
    <location>
        <position position="123"/>
    </location>
</feature>
<feature type="mutagenesis site" description="Slight defects in the stimulation of PAPOLA." evidence="10">
    <original>A</original>
    <variation>S</variation>
    <location>
        <position position="124"/>
    </location>
</feature>
<feature type="mutagenesis site" description="No defects in the stimulation of PAPOLA." evidence="10">
    <original>V</original>
    <variation>S</variation>
    <location>
        <position position="126"/>
    </location>
</feature>
<feature type="mutagenesis site" description="Slight defects in the stimulation of PAPOLA." evidence="10">
    <original>M</original>
    <variation>A</variation>
    <location>
        <position position="129"/>
    </location>
</feature>
<feature type="mutagenesis site" description="Slight defects in the stimulation of PAPOLA." evidence="10">
    <original>E</original>
    <variation>A</variation>
    <location>
        <position position="131"/>
    </location>
</feature>
<feature type="mutagenesis site" description="No defects in the stimulation of PAPOLA." evidence="10">
    <original>A</original>
    <variation>S</variation>
    <location>
        <position position="133"/>
    </location>
</feature>
<feature type="mutagenesis site" description="No defects in the stimulation of PAPOLA." evidence="10">
    <original>K</original>
    <variation>A</variation>
    <location>
        <position position="135"/>
    </location>
</feature>
<feature type="mutagenesis site" description="Inactivates PAPOLA." evidence="10">
    <original>L</original>
    <variation>A</variation>
    <variation>S</variation>
    <location>
        <position position="136"/>
    </location>
</feature>
<feature type="mutagenesis site" description="Slight defects in the stimulation of PAPOLA." evidence="10">
    <original>V</original>
    <variation>A</variation>
    <location>
        <position position="143"/>
    </location>
</feature>
<feature type="mutagenesis site" description="At least 20% decrease in poly(A) binding; no change in nuclear targeting; distributed uniformly in the nucleoplasm; not detected in speckles. Same phenotypic effect; when associated with A-215." evidence="8 9">
    <original>Y</original>
    <variation>A</variation>
    <location>
        <position position="175"/>
    </location>
</feature>
<feature type="mutagenesis site" description="No changes in poly(A) affinity." evidence="9">
    <original>K</original>
    <variation>Q</variation>
    <location>
        <position position="213"/>
    </location>
</feature>
<feature type="mutagenesis site" description="At least 20% decrease in poly(A); binding; no change in nuclear targeting, distributed uniformly in the nucleoplasm; not detected in speckles. Same phenotypic effect; when associated with A-175." evidence="8 9">
    <original>F</original>
    <variation>A</variation>
    <location>
        <position position="215"/>
    </location>
</feature>
<gene>
    <name type="primary">PABPN1</name>
    <name type="synonym">PAB2</name>
    <name type="synonym">PABP2</name>
</gene>
<organism>
    <name type="scientific">Bos taurus</name>
    <name type="common">Bovine</name>
    <dbReference type="NCBI Taxonomy" id="9913"/>
    <lineage>
        <taxon>Eukaryota</taxon>
        <taxon>Metazoa</taxon>
        <taxon>Chordata</taxon>
        <taxon>Craniata</taxon>
        <taxon>Vertebrata</taxon>
        <taxon>Euteleostomi</taxon>
        <taxon>Mammalia</taxon>
        <taxon>Eutheria</taxon>
        <taxon>Laurasiatheria</taxon>
        <taxon>Artiodactyla</taxon>
        <taxon>Ruminantia</taxon>
        <taxon>Pecora</taxon>
        <taxon>Bovidae</taxon>
        <taxon>Bovinae</taxon>
        <taxon>Bos</taxon>
    </lineage>
</organism>